<reference key="1">
    <citation type="journal article" date="2004" name="Nature">
        <title>Genome sequence of the Brown Norway rat yields insights into mammalian evolution.</title>
        <authorList>
            <person name="Gibbs R.A."/>
            <person name="Weinstock G.M."/>
            <person name="Metzker M.L."/>
            <person name="Muzny D.M."/>
            <person name="Sodergren E.J."/>
            <person name="Scherer S."/>
            <person name="Scott G."/>
            <person name="Steffen D."/>
            <person name="Worley K.C."/>
            <person name="Burch P.E."/>
            <person name="Okwuonu G."/>
            <person name="Hines S."/>
            <person name="Lewis L."/>
            <person name="Deramo C."/>
            <person name="Delgado O."/>
            <person name="Dugan-Rocha S."/>
            <person name="Miner G."/>
            <person name="Morgan M."/>
            <person name="Hawes A."/>
            <person name="Gill R."/>
            <person name="Holt R.A."/>
            <person name="Adams M.D."/>
            <person name="Amanatides P.G."/>
            <person name="Baden-Tillson H."/>
            <person name="Barnstead M."/>
            <person name="Chin S."/>
            <person name="Evans C.A."/>
            <person name="Ferriera S."/>
            <person name="Fosler C."/>
            <person name="Glodek A."/>
            <person name="Gu Z."/>
            <person name="Jennings D."/>
            <person name="Kraft C.L."/>
            <person name="Nguyen T."/>
            <person name="Pfannkoch C.M."/>
            <person name="Sitter C."/>
            <person name="Sutton G.G."/>
            <person name="Venter J.C."/>
            <person name="Woodage T."/>
            <person name="Smith D."/>
            <person name="Lee H.-M."/>
            <person name="Gustafson E."/>
            <person name="Cahill P."/>
            <person name="Kana A."/>
            <person name="Doucette-Stamm L."/>
            <person name="Weinstock K."/>
            <person name="Fechtel K."/>
            <person name="Weiss R.B."/>
            <person name="Dunn D.M."/>
            <person name="Green E.D."/>
            <person name="Blakesley R.W."/>
            <person name="Bouffard G.G."/>
            <person name="De Jong P.J."/>
            <person name="Osoegawa K."/>
            <person name="Zhu B."/>
            <person name="Marra M."/>
            <person name="Schein J."/>
            <person name="Bosdet I."/>
            <person name="Fjell C."/>
            <person name="Jones S."/>
            <person name="Krzywinski M."/>
            <person name="Mathewson C."/>
            <person name="Siddiqui A."/>
            <person name="Wye N."/>
            <person name="McPherson J."/>
            <person name="Zhao S."/>
            <person name="Fraser C.M."/>
            <person name="Shetty J."/>
            <person name="Shatsman S."/>
            <person name="Geer K."/>
            <person name="Chen Y."/>
            <person name="Abramzon S."/>
            <person name="Nierman W.C."/>
            <person name="Havlak P.H."/>
            <person name="Chen R."/>
            <person name="Durbin K.J."/>
            <person name="Egan A."/>
            <person name="Ren Y."/>
            <person name="Song X.-Z."/>
            <person name="Li B."/>
            <person name="Liu Y."/>
            <person name="Qin X."/>
            <person name="Cawley S."/>
            <person name="Cooney A.J."/>
            <person name="D'Souza L.M."/>
            <person name="Martin K."/>
            <person name="Wu J.Q."/>
            <person name="Gonzalez-Garay M.L."/>
            <person name="Jackson A.R."/>
            <person name="Kalafus K.J."/>
            <person name="McLeod M.P."/>
            <person name="Milosavljevic A."/>
            <person name="Virk D."/>
            <person name="Volkov A."/>
            <person name="Wheeler D.A."/>
            <person name="Zhang Z."/>
            <person name="Bailey J.A."/>
            <person name="Eichler E.E."/>
            <person name="Tuzun E."/>
            <person name="Birney E."/>
            <person name="Mongin E."/>
            <person name="Ureta-Vidal A."/>
            <person name="Woodwark C."/>
            <person name="Zdobnov E."/>
            <person name="Bork P."/>
            <person name="Suyama M."/>
            <person name="Torrents D."/>
            <person name="Alexandersson M."/>
            <person name="Trask B.J."/>
            <person name="Young J.M."/>
            <person name="Huang H."/>
            <person name="Wang H."/>
            <person name="Xing H."/>
            <person name="Daniels S."/>
            <person name="Gietzen D."/>
            <person name="Schmidt J."/>
            <person name="Stevens K."/>
            <person name="Vitt U."/>
            <person name="Wingrove J."/>
            <person name="Camara F."/>
            <person name="Mar Alba M."/>
            <person name="Abril J.F."/>
            <person name="Guigo R."/>
            <person name="Smit A."/>
            <person name="Dubchak I."/>
            <person name="Rubin E.M."/>
            <person name="Couronne O."/>
            <person name="Poliakov A."/>
            <person name="Huebner N."/>
            <person name="Ganten D."/>
            <person name="Goesele C."/>
            <person name="Hummel O."/>
            <person name="Kreitler T."/>
            <person name="Lee Y.-A."/>
            <person name="Monti J."/>
            <person name="Schulz H."/>
            <person name="Zimdahl H."/>
            <person name="Himmelbauer H."/>
            <person name="Lehrach H."/>
            <person name="Jacob H.J."/>
            <person name="Bromberg S."/>
            <person name="Gullings-Handley J."/>
            <person name="Jensen-Seaman M.I."/>
            <person name="Kwitek A.E."/>
            <person name="Lazar J."/>
            <person name="Pasko D."/>
            <person name="Tonellato P.J."/>
            <person name="Twigger S."/>
            <person name="Ponting C.P."/>
            <person name="Duarte J.M."/>
            <person name="Rice S."/>
            <person name="Goodstadt L."/>
            <person name="Beatson S.A."/>
            <person name="Emes R.D."/>
            <person name="Winter E.E."/>
            <person name="Webber C."/>
            <person name="Brandt P."/>
            <person name="Nyakatura G."/>
            <person name="Adetobi M."/>
            <person name="Chiaromonte F."/>
            <person name="Elnitski L."/>
            <person name="Eswara P."/>
            <person name="Hardison R.C."/>
            <person name="Hou M."/>
            <person name="Kolbe D."/>
            <person name="Makova K."/>
            <person name="Miller W."/>
            <person name="Nekrutenko A."/>
            <person name="Riemer C."/>
            <person name="Schwartz S."/>
            <person name="Taylor J."/>
            <person name="Yang S."/>
            <person name="Zhang Y."/>
            <person name="Lindpaintner K."/>
            <person name="Andrews T.D."/>
            <person name="Caccamo M."/>
            <person name="Clamp M."/>
            <person name="Clarke L."/>
            <person name="Curwen V."/>
            <person name="Durbin R.M."/>
            <person name="Eyras E."/>
            <person name="Searle S.M."/>
            <person name="Cooper G.M."/>
            <person name="Batzoglou S."/>
            <person name="Brudno M."/>
            <person name="Sidow A."/>
            <person name="Stone E.A."/>
            <person name="Payseur B.A."/>
            <person name="Bourque G."/>
            <person name="Lopez-Otin C."/>
            <person name="Puente X.S."/>
            <person name="Chakrabarti K."/>
            <person name="Chatterji S."/>
            <person name="Dewey C."/>
            <person name="Pachter L."/>
            <person name="Bray N."/>
            <person name="Yap V.B."/>
            <person name="Caspi A."/>
            <person name="Tesler G."/>
            <person name="Pevzner P.A."/>
            <person name="Haussler D."/>
            <person name="Roskin K.M."/>
            <person name="Baertsch R."/>
            <person name="Clawson H."/>
            <person name="Furey T.S."/>
            <person name="Hinrichs A.S."/>
            <person name="Karolchik D."/>
            <person name="Kent W.J."/>
            <person name="Rosenbloom K.R."/>
            <person name="Trumbower H."/>
            <person name="Weirauch M."/>
            <person name="Cooper D.N."/>
            <person name="Stenson P.D."/>
            <person name="Ma B."/>
            <person name="Brent M."/>
            <person name="Arumugam M."/>
            <person name="Shteynberg D."/>
            <person name="Copley R.R."/>
            <person name="Taylor M.S."/>
            <person name="Riethman H."/>
            <person name="Mudunuri U."/>
            <person name="Peterson J."/>
            <person name="Guyer M."/>
            <person name="Felsenfeld A."/>
            <person name="Old S."/>
            <person name="Mockrin S."/>
            <person name="Collins F.S."/>
        </authorList>
    </citation>
    <scope>NUCLEOTIDE SEQUENCE [LARGE SCALE GENOMIC DNA]</scope>
    <source>
        <strain>Brown Norway</strain>
    </source>
</reference>
<reference key="2">
    <citation type="submission" date="2005-09" db="EMBL/GenBank/DDBJ databases">
        <authorList>
            <person name="Mural R.J."/>
            <person name="Adams M.D."/>
            <person name="Myers E.W."/>
            <person name="Smith H.O."/>
            <person name="Venter J.C."/>
        </authorList>
    </citation>
    <scope>NUCLEOTIDE SEQUENCE [LARGE SCALE GENOMIC DNA]</scope>
</reference>
<reference key="3">
    <citation type="journal article" date="2004" name="Genome Res.">
        <title>The status, quality, and expansion of the NIH full-length cDNA project: the Mammalian Gene Collection (MGC).</title>
        <authorList>
            <consortium name="The MGC Project Team"/>
        </authorList>
    </citation>
    <scope>NUCLEOTIDE SEQUENCE [LARGE SCALE MRNA] (ISOFORM 2)</scope>
    <source>
        <tissue evidence="6">Pituitary</tissue>
    </source>
</reference>
<reference key="4">
    <citation type="journal article" date="2016" name="PLoS ONE">
        <title>Penta-EF-Hand protein peflin is a negative regulator of ER-to-Golgi transport.</title>
        <authorList>
            <person name="Rayl M."/>
            <person name="Truitt M."/>
            <person name="Held A."/>
            <person name="Sargeant J."/>
            <person name="Thorsen K."/>
            <person name="Hay J.C."/>
        </authorList>
    </citation>
    <scope>FUNCTION</scope>
    <scope>SUBCELLULAR LOCATION</scope>
</reference>
<protein>
    <recommendedName>
        <fullName>Programmed cell death protein 6</fullName>
    </recommendedName>
    <alternativeName>
        <fullName evidence="2">Apoptosis-linked gene 2 protein homolog</fullName>
        <shortName evidence="2">ALG-2</shortName>
    </alternativeName>
</protein>
<gene>
    <name evidence="7" type="primary">Pdcd6</name>
    <name evidence="2" type="synonym">Alg2</name>
</gene>
<proteinExistence type="evidence at transcript level"/>
<comment type="function">
    <text evidence="1 2 4">Calcium sensor that plays a key role in processes such as endoplasmic reticulum (ER)-Golgi vesicular transport, endosomal biogenesis or membrane repair (By similarity). Acts as an adapter that bridges unrelated proteins or stabilizes weak protein-protein complexes in response to calcium: calcium-binding triggers exposure of apolar surface, promoting interaction with different sets of proteins thanks to 3 different hydrophobic pockets, leading to translocation to membranes (By similarity). Involved in ER-Golgi transport (PubMed:27276012). Regulates ER-Golgi transport by promoting the association between PDCD6IP and TSG101, thereby bridging together the ESCRT-III and ESCRT-I complexes (By similarity). Together with PEF1, acts as a calcium-dependent adapter for the BCR(KLHL12) complex, a complex involved in ER-Golgi transport by regulating the size of COPII coats (By similarity). In response to cytosolic calcium increase, the heterodimer formed with PEF1 interacts with, and bridges together the BCR(KLHL12) complex and SEC31 (SEC31A or SEC31B), promoting monoubiquitination of SEC31 and subsequent collagen export, which is required for neural crest specification (By similarity). Involved in the regulation of the distribution and function of MCOLN1 in the endosomal pathway (By similarity). Promotes localization and polymerization of TFG at endoplasmic reticulum exit site (By similarity). Required for T-cell receptor-, Fas-, and glucocorticoid-induced apoptosis (By similarity). May mediate Ca(2+)-regulated signals along the death pathway: interaction with DAPK1 can accelerate apoptotic cell death by increasing caspase-3 activity (By similarity). Its role in apoptosis may however be indirect, as suggested by knockout experiments (By similarity). May inhibit KDR/VEGFR2-dependent angiogenesis; the function involves inhibition of VEGF-induced phosphorylation of the Akt signaling pathway (By similarity).</text>
</comment>
<comment type="function">
    <molecule>Isoform 2</molecule>
    <text evidence="2">Has a lower Ca(2+) affinity than isoform 1 (By similarity).</text>
</comment>
<comment type="subunit">
    <text evidence="1 2">Homodimer and heterodimer; heterodimerizes (via the EF-hand 5) with PEF1 (By similarity). Isoform 1 and isoform 2 self-associate; probably forming homodimers. Interacts with CPNE4 (via VWFA domain) (By similarity). Interacts with PDCD6IP; the interaction is calcium-dependent. Interacts with RBM22. Interacts with PLSCR4. Interacts with ANXA7 and TSG101. Interacts with DAPK1. Interacts with SEC31A; the interaction is calcium-dependent and promotes monoubiquitination of SEC31A. Interacts with ANXA11 (via N-terminus); the interaction is calcium-dependent. Interacts with PLSCR3 (via N-terminus); the interaction is calcium-dependent. Interacts with MCOLN1; the interaction is calcium-dependent. Interacts with KDR; the interaction is calcium-dependent. Interacts with HEBP2; the interaction is calcium-dependent. Interacts with TFG. Isoform 1: Interacts with SHISA5, leading to stabilize it. Isoform 2: Does not interact with SHISA5. Isoform 2: Does not interact with PDCD6IP, TSG101, ANXA7 and ANXA11 (By similarity).</text>
</comment>
<comment type="subcellular location">
    <subcellularLocation>
        <location evidence="4">Endoplasmic reticulum membrane</location>
        <topology evidence="1">Peripheral membrane protein</topology>
    </subcellularLocation>
    <subcellularLocation>
        <location evidence="1">Cytoplasmic vesicle</location>
        <location evidence="1">COPII-coated vesicle membrane</location>
    </subcellularLocation>
    <subcellularLocation>
        <location evidence="1">Cytoplasm</location>
    </subcellularLocation>
    <subcellularLocation>
        <location evidence="1">Nucleus</location>
    </subcellularLocation>
    <subcellularLocation>
        <location evidence="1">Endosome</location>
    </subcellularLocation>
    <text evidence="1 4">Interaction with RBM22 induces relocalization from the cytoplasm to the nucleus (By similarity). Translocated from the cytoplasm to the nucleus after heat shock cell treatment (By similarity). Accumulates in cytoplasmic vesicle-like organelles after heat shock treatment, which may represent stress granules (By similarity). In response to calcium increase, relocates from cytoplasm to COPII vesicle coat (By similarity). Localizes to endoplasmic reticulum exit site (ERES) (PubMed:27276012).</text>
</comment>
<comment type="alternative products">
    <event type="alternative splicing"/>
    <isoform>
        <id>G3V7W1-1</id>
        <name>1</name>
        <sequence type="displayed"/>
    </isoform>
    <isoform>
        <id>G3V7W1-2</id>
        <name>2</name>
        <sequence type="described" ref="VSP_058894"/>
    </isoform>
</comment>
<comment type="domain">
    <text evidence="1">Interacts with different set of proteins thanks to 3 different hydrophobic pockets. Hydrophobic pockets 1 and 2, which mediate interaction with PDCD6IP, are largely formed by residues from EF-hand 3 (EF3) to 5 (EF5), as well as by Tyr-180 (EF5) of a dimerizing molecule (Pocket 1) and from EF-hand (EF2) to 4 (EF4) (Pocket 2). Hydrophobic pocket 3, which mediates interaction with SEC31A, is mainly formed by residues from EF-hand 1 (EF1) to 3 (EF3).</text>
</comment>
<comment type="domain">
    <text evidence="1 2">EF-hand 1 (EF1) and 3 (EF3) are the high-affinity calcium-binding sites, while EF-hand 5 (EF5) binds calcium with low-affinity. A one-residue insertion in the EF5-binding loop prevents the glutamyl residue at the C-terminal end of the loop from serving as the canonical bidentate calcium ligand (By similarity). EF5 acts as a high-affinity magnesium-binding domain instead (By similarity). Magnesium, may affect dimerization (By similarity). EF5 may bind either calcium or magnesium depending on the context (By similarity).</text>
</comment>
<feature type="initiator methionine" description="Removed" evidence="1">
    <location>
        <position position="1"/>
    </location>
</feature>
<feature type="chain" id="PRO_0000439642" description="Programmed cell death protein 6" evidence="2">
    <location>
        <begin position="2"/>
        <end position="191"/>
    </location>
</feature>
<feature type="domain" description="EF-hand 1" evidence="3">
    <location>
        <begin position="23"/>
        <end position="58"/>
    </location>
</feature>
<feature type="domain" description="EF-hand 2" evidence="5">
    <location>
        <begin position="59"/>
        <end position="89"/>
    </location>
</feature>
<feature type="domain" description="EF-hand 3" evidence="3">
    <location>
        <begin position="90"/>
        <end position="125"/>
    </location>
</feature>
<feature type="domain" description="EF-hand 4" evidence="5">
    <location>
        <begin position="126"/>
        <end position="161"/>
    </location>
</feature>
<feature type="domain" description="EF-hand 5" evidence="3">
    <location>
        <begin position="162"/>
        <end position="191"/>
    </location>
</feature>
<feature type="binding site" evidence="2 3">
    <location>
        <position position="36"/>
    </location>
    <ligand>
        <name>Ca(2+)</name>
        <dbReference type="ChEBI" id="CHEBI:29108"/>
        <label>1</label>
    </ligand>
</feature>
<feature type="binding site" evidence="2 3">
    <location>
        <position position="38"/>
    </location>
    <ligand>
        <name>Ca(2+)</name>
        <dbReference type="ChEBI" id="CHEBI:29108"/>
        <label>1</label>
    </ligand>
</feature>
<feature type="binding site" evidence="2 3">
    <location>
        <position position="40"/>
    </location>
    <ligand>
        <name>Ca(2+)</name>
        <dbReference type="ChEBI" id="CHEBI:29108"/>
        <label>1</label>
    </ligand>
</feature>
<feature type="binding site" evidence="2">
    <location>
        <position position="42"/>
    </location>
    <ligand>
        <name>Ca(2+)</name>
        <dbReference type="ChEBI" id="CHEBI:29108"/>
        <label>1</label>
    </ligand>
</feature>
<feature type="binding site" evidence="2 3">
    <location>
        <position position="47"/>
    </location>
    <ligand>
        <name>Ca(2+)</name>
        <dbReference type="ChEBI" id="CHEBI:29108"/>
        <label>1</label>
    </ligand>
</feature>
<feature type="binding site" evidence="2 3">
    <location>
        <position position="103"/>
    </location>
    <ligand>
        <name>Ca(2+)</name>
        <dbReference type="ChEBI" id="CHEBI:29108"/>
        <label>2</label>
    </ligand>
</feature>
<feature type="binding site" evidence="2 3">
    <location>
        <position position="105"/>
    </location>
    <ligand>
        <name>Ca(2+)</name>
        <dbReference type="ChEBI" id="CHEBI:29108"/>
        <label>2</label>
    </ligand>
</feature>
<feature type="binding site" evidence="2 3">
    <location>
        <position position="107"/>
    </location>
    <ligand>
        <name>Ca(2+)</name>
        <dbReference type="ChEBI" id="CHEBI:29108"/>
        <label>2</label>
    </ligand>
</feature>
<feature type="binding site" evidence="2 3">
    <location>
        <position position="109"/>
    </location>
    <ligand>
        <name>Ca(2+)</name>
        <dbReference type="ChEBI" id="CHEBI:29108"/>
        <label>2</label>
    </ligand>
</feature>
<feature type="binding site" evidence="2 3">
    <location>
        <position position="114"/>
    </location>
    <ligand>
        <name>Ca(2+)</name>
        <dbReference type="ChEBI" id="CHEBI:29108"/>
        <label>2</label>
    </ligand>
</feature>
<feature type="binding site" evidence="2">
    <location>
        <position position="169"/>
    </location>
    <ligand>
        <name>Mg(2+)</name>
        <dbReference type="ChEBI" id="CHEBI:18420"/>
    </ligand>
</feature>
<feature type="binding site" evidence="2">
    <location>
        <position position="171"/>
    </location>
    <ligand>
        <name>Mg(2+)</name>
        <dbReference type="ChEBI" id="CHEBI:18420"/>
    </ligand>
</feature>
<feature type="binding site" evidence="2">
    <location>
        <position position="173"/>
    </location>
    <ligand>
        <name>Mg(2+)</name>
        <dbReference type="ChEBI" id="CHEBI:18420"/>
    </ligand>
</feature>
<feature type="binding site" evidence="2">
    <location>
        <position position="175"/>
    </location>
    <ligand>
        <name>Mg(2+)</name>
        <dbReference type="ChEBI" id="CHEBI:18420"/>
    </ligand>
</feature>
<feature type="modified residue" description="N-acetylalanine" evidence="1">
    <location>
        <position position="2"/>
    </location>
</feature>
<feature type="splice variant" id="VSP_058894" description="In isoform 2.">
    <location>
        <begin position="121"/>
        <end position="122"/>
    </location>
</feature>
<evidence type="ECO:0000250" key="1">
    <source>
        <dbReference type="UniProtKB" id="O75340"/>
    </source>
</evidence>
<evidence type="ECO:0000250" key="2">
    <source>
        <dbReference type="UniProtKB" id="P12815"/>
    </source>
</evidence>
<evidence type="ECO:0000255" key="3">
    <source>
        <dbReference type="PROSITE-ProRule" id="PRU00448"/>
    </source>
</evidence>
<evidence type="ECO:0000269" key="4">
    <source>
    </source>
</evidence>
<evidence type="ECO:0000305" key="5"/>
<evidence type="ECO:0000312" key="6">
    <source>
        <dbReference type="EMBL" id="AAI68744.1"/>
    </source>
</evidence>
<evidence type="ECO:0000312" key="7">
    <source>
        <dbReference type="RGD" id="1311239"/>
    </source>
</evidence>
<dbReference type="EMBL" id="AC094217">
    <property type="status" value="NOT_ANNOTATED_CDS"/>
    <property type="molecule type" value="Genomic_DNA"/>
</dbReference>
<dbReference type="EMBL" id="CH474002">
    <property type="protein sequence ID" value="EDL87681.1"/>
    <property type="molecule type" value="Genomic_DNA"/>
</dbReference>
<dbReference type="EMBL" id="BC168744">
    <property type="protein sequence ID" value="AAI68744.1"/>
    <property type="molecule type" value="mRNA"/>
</dbReference>
<dbReference type="RefSeq" id="NP_001100922.1">
    <molecule id="G3V7W1-1"/>
    <property type="nucleotide sequence ID" value="NM_001107452.1"/>
</dbReference>
<dbReference type="RefSeq" id="XP_006227846.1">
    <molecule id="G3V7W1-2"/>
    <property type="nucleotide sequence ID" value="XM_006227784.5"/>
</dbReference>
<dbReference type="SMR" id="G3V7W1"/>
<dbReference type="FunCoup" id="G3V7W1">
    <property type="interactions" value="3221"/>
</dbReference>
<dbReference type="STRING" id="10116.ENSRNOP00000019735"/>
<dbReference type="PhosphoSitePlus" id="G3V7W1"/>
<dbReference type="jPOST" id="G3V7W1"/>
<dbReference type="PaxDb" id="10116-ENSRNOP00000019735"/>
<dbReference type="Ensembl" id="ENSRNOT00000019735.6">
    <molecule id="G3V7W1-1"/>
    <property type="protein sequence ID" value="ENSRNOP00000019735.4"/>
    <property type="gene ID" value="ENSRNOG00000014485.6"/>
</dbReference>
<dbReference type="GeneID" id="308061"/>
<dbReference type="KEGG" id="rno:308061"/>
<dbReference type="AGR" id="RGD:1311239"/>
<dbReference type="CTD" id="10016"/>
<dbReference type="RGD" id="1311239">
    <property type="gene designation" value="Pdcd6"/>
</dbReference>
<dbReference type="eggNOG" id="KOG0037">
    <property type="taxonomic scope" value="Eukaryota"/>
</dbReference>
<dbReference type="GeneTree" id="ENSGT00940000160982"/>
<dbReference type="HOGENOM" id="CLU_051357_1_1_1"/>
<dbReference type="InParanoid" id="G3V7W1"/>
<dbReference type="OMA" id="FYNILMH"/>
<dbReference type="OrthoDB" id="19714at9989"/>
<dbReference type="TreeFam" id="TF314682"/>
<dbReference type="PRO" id="PR:G3V7W1"/>
<dbReference type="Proteomes" id="UP000002494">
    <property type="component" value="Chromosome 1"/>
</dbReference>
<dbReference type="Proteomes" id="UP000234681">
    <property type="component" value="Chromosome 1"/>
</dbReference>
<dbReference type="Bgee" id="ENSRNOG00000014485">
    <property type="expression patterns" value="Expressed in jejunum and 20 other cell types or tissues"/>
</dbReference>
<dbReference type="GO" id="GO:0030127">
    <property type="term" value="C:COPII vesicle coat"/>
    <property type="evidence" value="ECO:0000250"/>
    <property type="project" value="UniProtKB"/>
</dbReference>
<dbReference type="GO" id="GO:0031463">
    <property type="term" value="C:Cul3-RING ubiquitin ligase complex"/>
    <property type="evidence" value="ECO:0000250"/>
    <property type="project" value="UniProtKB"/>
</dbReference>
<dbReference type="GO" id="GO:0005737">
    <property type="term" value="C:cytoplasm"/>
    <property type="evidence" value="ECO:0000250"/>
    <property type="project" value="UniProtKB"/>
</dbReference>
<dbReference type="GO" id="GO:0031410">
    <property type="term" value="C:cytoplasmic vesicle"/>
    <property type="evidence" value="ECO:0000266"/>
    <property type="project" value="RGD"/>
</dbReference>
<dbReference type="GO" id="GO:0005829">
    <property type="term" value="C:cytosol"/>
    <property type="evidence" value="ECO:0007669"/>
    <property type="project" value="Ensembl"/>
</dbReference>
<dbReference type="GO" id="GO:0005783">
    <property type="term" value="C:endoplasmic reticulum"/>
    <property type="evidence" value="ECO:0000266"/>
    <property type="project" value="RGD"/>
</dbReference>
<dbReference type="GO" id="GO:0070971">
    <property type="term" value="C:endoplasmic reticulum exit site"/>
    <property type="evidence" value="ECO:0000250"/>
    <property type="project" value="UniProtKB"/>
</dbReference>
<dbReference type="GO" id="GO:0005789">
    <property type="term" value="C:endoplasmic reticulum membrane"/>
    <property type="evidence" value="ECO:0007669"/>
    <property type="project" value="UniProtKB-SubCell"/>
</dbReference>
<dbReference type="GO" id="GO:0005768">
    <property type="term" value="C:endosome"/>
    <property type="evidence" value="ECO:0007669"/>
    <property type="project" value="UniProtKB-SubCell"/>
</dbReference>
<dbReference type="GO" id="GO:0005654">
    <property type="term" value="C:nucleoplasm"/>
    <property type="evidence" value="ECO:0007669"/>
    <property type="project" value="Ensembl"/>
</dbReference>
<dbReference type="GO" id="GO:0005634">
    <property type="term" value="C:nucleus"/>
    <property type="evidence" value="ECO:0000250"/>
    <property type="project" value="UniProtKB"/>
</dbReference>
<dbReference type="GO" id="GO:0048471">
    <property type="term" value="C:perinuclear region of cytoplasm"/>
    <property type="evidence" value="ECO:0000266"/>
    <property type="project" value="RGD"/>
</dbReference>
<dbReference type="GO" id="GO:0005509">
    <property type="term" value="F:calcium ion binding"/>
    <property type="evidence" value="ECO:0000250"/>
    <property type="project" value="UniProtKB"/>
</dbReference>
<dbReference type="GO" id="GO:0048306">
    <property type="term" value="F:calcium-dependent protein binding"/>
    <property type="evidence" value="ECO:0000266"/>
    <property type="project" value="RGD"/>
</dbReference>
<dbReference type="GO" id="GO:0042802">
    <property type="term" value="F:identical protein binding"/>
    <property type="evidence" value="ECO:0000266"/>
    <property type="project" value="RGD"/>
</dbReference>
<dbReference type="GO" id="GO:0000287">
    <property type="term" value="F:magnesium ion binding"/>
    <property type="evidence" value="ECO:0000250"/>
    <property type="project" value="UniProtKB"/>
</dbReference>
<dbReference type="GO" id="GO:0046983">
    <property type="term" value="F:protein dimerization activity"/>
    <property type="evidence" value="ECO:0000266"/>
    <property type="project" value="RGD"/>
</dbReference>
<dbReference type="GO" id="GO:0046982">
    <property type="term" value="F:protein heterodimerization activity"/>
    <property type="evidence" value="ECO:0000266"/>
    <property type="project" value="RGD"/>
</dbReference>
<dbReference type="GO" id="GO:0042803">
    <property type="term" value="F:protein homodimerization activity"/>
    <property type="evidence" value="ECO:0000250"/>
    <property type="project" value="UniProtKB"/>
</dbReference>
<dbReference type="GO" id="GO:0030674">
    <property type="term" value="F:protein-macromolecule adaptor activity"/>
    <property type="evidence" value="ECO:0000266"/>
    <property type="project" value="RGD"/>
</dbReference>
<dbReference type="GO" id="GO:0043495">
    <property type="term" value="F:protein-membrane adaptor activity"/>
    <property type="evidence" value="ECO:0000266"/>
    <property type="project" value="RGD"/>
</dbReference>
<dbReference type="GO" id="GO:1990756">
    <property type="term" value="F:ubiquitin-like ligase-substrate adaptor activity"/>
    <property type="evidence" value="ECO:0000250"/>
    <property type="project" value="UniProtKB"/>
</dbReference>
<dbReference type="GO" id="GO:0001525">
    <property type="term" value="P:angiogenesis"/>
    <property type="evidence" value="ECO:0007669"/>
    <property type="project" value="UniProtKB-KW"/>
</dbReference>
<dbReference type="GO" id="GO:0006915">
    <property type="term" value="P:apoptotic process"/>
    <property type="evidence" value="ECO:0000266"/>
    <property type="project" value="RGD"/>
</dbReference>
<dbReference type="GO" id="GO:0034605">
    <property type="term" value="P:cellular response to heat"/>
    <property type="evidence" value="ECO:0000266"/>
    <property type="project" value="RGD"/>
</dbReference>
<dbReference type="GO" id="GO:0048208">
    <property type="term" value="P:COPII vesicle coating"/>
    <property type="evidence" value="ECO:0000250"/>
    <property type="project" value="UniProtKB"/>
</dbReference>
<dbReference type="GO" id="GO:0006888">
    <property type="term" value="P:endoplasmic reticulum to Golgi vesicle-mediated transport"/>
    <property type="evidence" value="ECO:0000250"/>
    <property type="project" value="UniProtKB"/>
</dbReference>
<dbReference type="GO" id="GO:0006886">
    <property type="term" value="P:intracellular protein transport"/>
    <property type="evidence" value="ECO:0000266"/>
    <property type="project" value="RGD"/>
</dbReference>
<dbReference type="GO" id="GO:0051898">
    <property type="term" value="P:negative regulation of phosphatidylinositol 3-kinase/protein kinase B signal transduction"/>
    <property type="evidence" value="ECO:0000266"/>
    <property type="project" value="RGD"/>
</dbReference>
<dbReference type="GO" id="GO:0032007">
    <property type="term" value="P:negative regulation of TOR signaling"/>
    <property type="evidence" value="ECO:0000266"/>
    <property type="project" value="RGD"/>
</dbReference>
<dbReference type="GO" id="GO:0030948">
    <property type="term" value="P:negative regulation of vascular endothelial growth factor receptor signaling pathway"/>
    <property type="evidence" value="ECO:0000266"/>
    <property type="project" value="RGD"/>
</dbReference>
<dbReference type="GO" id="GO:0014032">
    <property type="term" value="P:neural crest cell development"/>
    <property type="evidence" value="ECO:0000250"/>
    <property type="project" value="UniProtKB"/>
</dbReference>
<dbReference type="GO" id="GO:0014029">
    <property type="term" value="P:neural crest formation"/>
    <property type="evidence" value="ECO:0000250"/>
    <property type="project" value="UniProtKB"/>
</dbReference>
<dbReference type="GO" id="GO:0045766">
    <property type="term" value="P:positive regulation of angiogenesis"/>
    <property type="evidence" value="ECO:0000266"/>
    <property type="project" value="RGD"/>
</dbReference>
<dbReference type="GO" id="GO:0043065">
    <property type="term" value="P:positive regulation of apoptotic process"/>
    <property type="evidence" value="ECO:0000266"/>
    <property type="project" value="RGD"/>
</dbReference>
<dbReference type="GO" id="GO:0010595">
    <property type="term" value="P:positive regulation of endothelial cell migration"/>
    <property type="evidence" value="ECO:0000266"/>
    <property type="project" value="RGD"/>
</dbReference>
<dbReference type="GO" id="GO:0001938">
    <property type="term" value="P:positive regulation of endothelial cell proliferation"/>
    <property type="evidence" value="ECO:0000266"/>
    <property type="project" value="RGD"/>
</dbReference>
<dbReference type="GO" id="GO:1902527">
    <property type="term" value="P:positive regulation of protein monoubiquitination"/>
    <property type="evidence" value="ECO:0000250"/>
    <property type="project" value="UniProtKB"/>
</dbReference>
<dbReference type="GO" id="GO:0051592">
    <property type="term" value="P:response to calcium ion"/>
    <property type="evidence" value="ECO:0000266"/>
    <property type="project" value="RGD"/>
</dbReference>
<dbReference type="GO" id="GO:0036324">
    <property type="term" value="P:vascular endothelial growth factor receptor-2 signaling pathway"/>
    <property type="evidence" value="ECO:0000266"/>
    <property type="project" value="RGD"/>
</dbReference>
<dbReference type="CDD" id="cd16183">
    <property type="entry name" value="EFh_PEF_ALG-2"/>
    <property type="match status" value="1"/>
</dbReference>
<dbReference type="FunFam" id="1.10.238.10:FF:000187">
    <property type="entry name" value="Programmed cell death protein 6"/>
    <property type="match status" value="1"/>
</dbReference>
<dbReference type="Gene3D" id="1.10.238.10">
    <property type="entry name" value="EF-hand"/>
    <property type="match status" value="1"/>
</dbReference>
<dbReference type="InterPro" id="IPR011992">
    <property type="entry name" value="EF-hand-dom_pair"/>
</dbReference>
<dbReference type="InterPro" id="IPR018247">
    <property type="entry name" value="EF_Hand_1_Ca_BS"/>
</dbReference>
<dbReference type="InterPro" id="IPR002048">
    <property type="entry name" value="EF_hand_dom"/>
</dbReference>
<dbReference type="InterPro" id="IPR051426">
    <property type="entry name" value="Peflin/Sorcin_CaBP"/>
</dbReference>
<dbReference type="PANTHER" id="PTHR46212">
    <property type="entry name" value="PEFLIN"/>
    <property type="match status" value="1"/>
</dbReference>
<dbReference type="PANTHER" id="PTHR46212:SF9">
    <property type="entry name" value="PROGRAMMED CELL DEATH PROTEIN 6"/>
    <property type="match status" value="1"/>
</dbReference>
<dbReference type="Pfam" id="PF13499">
    <property type="entry name" value="EF-hand_7"/>
    <property type="match status" value="2"/>
</dbReference>
<dbReference type="SMART" id="SM00054">
    <property type="entry name" value="EFh"/>
    <property type="match status" value="5"/>
</dbReference>
<dbReference type="SUPFAM" id="SSF47473">
    <property type="entry name" value="EF-hand"/>
    <property type="match status" value="1"/>
</dbReference>
<dbReference type="PROSITE" id="PS00018">
    <property type="entry name" value="EF_HAND_1"/>
    <property type="match status" value="2"/>
</dbReference>
<dbReference type="PROSITE" id="PS50222">
    <property type="entry name" value="EF_HAND_2"/>
    <property type="match status" value="3"/>
</dbReference>
<sequence length="191" mass="21905">MAAYSYRPGPGAGPGPAAGAALPDQSFLWNVFQRVDKDRSGVISDNELQQALSNGTWTPFNPVTVRSIISMFDRENKAGVNFSEFTGVWKYITDWQNVFRTYDRDNSGMIDKHELKQALSGFGYRLSDQFHDILIRKFDRQGRGQIAFDDFIQGCIVLQRLTDIFRRYDTDQDGWIQVSYEQYLSMVFSIV</sequence>
<organism>
    <name type="scientific">Rattus norvegicus</name>
    <name type="common">Rat</name>
    <dbReference type="NCBI Taxonomy" id="10116"/>
    <lineage>
        <taxon>Eukaryota</taxon>
        <taxon>Metazoa</taxon>
        <taxon>Chordata</taxon>
        <taxon>Craniata</taxon>
        <taxon>Vertebrata</taxon>
        <taxon>Euteleostomi</taxon>
        <taxon>Mammalia</taxon>
        <taxon>Eutheria</taxon>
        <taxon>Euarchontoglires</taxon>
        <taxon>Glires</taxon>
        <taxon>Rodentia</taxon>
        <taxon>Myomorpha</taxon>
        <taxon>Muroidea</taxon>
        <taxon>Muridae</taxon>
        <taxon>Murinae</taxon>
        <taxon>Rattus</taxon>
    </lineage>
</organism>
<name>PDCD6_RAT</name>
<accession>G3V7W1</accession>
<accession>B5DEP1</accession>
<keyword id="KW-0007">Acetylation</keyword>
<keyword id="KW-0025">Alternative splicing</keyword>
<keyword id="KW-0037">Angiogenesis</keyword>
<keyword id="KW-0053">Apoptosis</keyword>
<keyword id="KW-0106">Calcium</keyword>
<keyword id="KW-0963">Cytoplasm</keyword>
<keyword id="KW-0968">Cytoplasmic vesicle</keyword>
<keyword id="KW-0256">Endoplasmic reticulum</keyword>
<keyword id="KW-0967">Endosome</keyword>
<keyword id="KW-0460">Magnesium</keyword>
<keyword id="KW-0472">Membrane</keyword>
<keyword id="KW-0479">Metal-binding</keyword>
<keyword id="KW-0539">Nucleus</keyword>
<keyword id="KW-1185">Reference proteome</keyword>
<keyword id="KW-0677">Repeat</keyword>